<proteinExistence type="evidence at transcript level"/>
<organism>
    <name type="scientific">Cataglyphis bombycina</name>
    <name type="common">Saharan silver ant</name>
    <name type="synonym">Formica bombycina</name>
    <dbReference type="NCBI Taxonomy" id="72790"/>
    <lineage>
        <taxon>Eukaryota</taxon>
        <taxon>Metazoa</taxon>
        <taxon>Ecdysozoa</taxon>
        <taxon>Arthropoda</taxon>
        <taxon>Hexapoda</taxon>
        <taxon>Insecta</taxon>
        <taxon>Pterygota</taxon>
        <taxon>Neoptera</taxon>
        <taxon>Endopterygota</taxon>
        <taxon>Hymenoptera</taxon>
        <taxon>Apocrita</taxon>
        <taxon>Aculeata</taxon>
        <taxon>Formicoidea</taxon>
        <taxon>Formicidae</taxon>
        <taxon>Formicinae</taxon>
        <taxon>Cataglyphis</taxon>
    </lineage>
</organism>
<name>OPSD_CATBO</name>
<accession>Q17296</accession>
<feature type="chain" id="PRO_0000197641" description="Rhodopsin">
    <location>
        <begin position="1"/>
        <end position="378"/>
    </location>
</feature>
<feature type="topological domain" description="Extracellular" evidence="2">
    <location>
        <begin position="1"/>
        <end position="53"/>
    </location>
</feature>
<feature type="transmembrane region" description="Helical; Name=1" evidence="2">
    <location>
        <begin position="54"/>
        <end position="78"/>
    </location>
</feature>
<feature type="topological domain" description="Cytoplasmic" evidence="2">
    <location>
        <begin position="79"/>
        <end position="90"/>
    </location>
</feature>
<feature type="transmembrane region" description="Helical; Name=2" evidence="2">
    <location>
        <begin position="91"/>
        <end position="115"/>
    </location>
</feature>
<feature type="topological domain" description="Extracellular" evidence="2">
    <location>
        <begin position="116"/>
        <end position="130"/>
    </location>
</feature>
<feature type="transmembrane region" description="Helical; Name=3" evidence="2">
    <location>
        <begin position="131"/>
        <end position="150"/>
    </location>
</feature>
<feature type="topological domain" description="Cytoplasmic" evidence="2">
    <location>
        <begin position="151"/>
        <end position="169"/>
    </location>
</feature>
<feature type="transmembrane region" description="Helical; Name=4" evidence="2">
    <location>
        <begin position="170"/>
        <end position="193"/>
    </location>
</feature>
<feature type="topological domain" description="Extracellular" evidence="2">
    <location>
        <begin position="194"/>
        <end position="217"/>
    </location>
</feature>
<feature type="transmembrane region" description="Helical; Name=5" evidence="2">
    <location>
        <begin position="218"/>
        <end position="245"/>
    </location>
</feature>
<feature type="topological domain" description="Cytoplasmic" evidence="2">
    <location>
        <begin position="246"/>
        <end position="280"/>
    </location>
</feature>
<feature type="transmembrane region" description="Helical; Name=6" evidence="2">
    <location>
        <begin position="281"/>
        <end position="304"/>
    </location>
</feature>
<feature type="topological domain" description="Extracellular" evidence="2">
    <location>
        <begin position="305"/>
        <end position="311"/>
    </location>
</feature>
<feature type="transmembrane region" description="Helical; Name=7" evidence="2">
    <location>
        <begin position="312"/>
        <end position="336"/>
    </location>
</feature>
<feature type="topological domain" description="Cytoplasmic" evidence="2">
    <location>
        <begin position="337"/>
        <end position="378"/>
    </location>
</feature>
<feature type="region of interest" description="Disordered" evidence="4">
    <location>
        <begin position="356"/>
        <end position="378"/>
    </location>
</feature>
<feature type="compositionally biased region" description="Low complexity" evidence="4">
    <location>
        <begin position="362"/>
        <end position="371"/>
    </location>
</feature>
<feature type="modified residue" description="N6-(retinylidene)lysine" evidence="1">
    <location>
        <position position="323"/>
    </location>
</feature>
<feature type="glycosylation site" description="N-linked (GlcNAc...) asparagine" evidence="2">
    <location>
        <position position="24"/>
    </location>
</feature>
<feature type="glycosylation site" description="N-linked (GlcNAc...) asparagine" evidence="2">
    <location>
        <position position="200"/>
    </location>
</feature>
<feature type="disulfide bond" evidence="3">
    <location>
        <begin position="127"/>
        <end position="204"/>
    </location>
</feature>
<comment type="function">
    <text>Visual pigments are the light-absorbing molecules that mediate vision. They consist of an apoprotein, opsin, covalently linked to cis-retinal.</text>
</comment>
<comment type="subcellular location">
    <subcellularLocation>
        <location>Membrane</location>
        <topology>Multi-pass membrane protein</topology>
    </subcellularLocation>
</comment>
<comment type="PTM">
    <text evidence="1">Phosphorylated on some or all of the serine and threonine residues present in the C-terminal region.</text>
</comment>
<comment type="similarity">
    <text evidence="3">Belongs to the G-protein coupled receptor 1 family. Opsin subfamily.</text>
</comment>
<dbReference type="EMBL" id="U32501">
    <property type="protein sequence ID" value="AAC47084.1"/>
    <property type="molecule type" value="mRNA"/>
</dbReference>
<dbReference type="SMR" id="Q17296"/>
<dbReference type="GO" id="GO:0005886">
    <property type="term" value="C:plasma membrane"/>
    <property type="evidence" value="ECO:0000250"/>
    <property type="project" value="UniProtKB"/>
</dbReference>
<dbReference type="GO" id="GO:0004930">
    <property type="term" value="F:G protein-coupled receptor activity"/>
    <property type="evidence" value="ECO:0007669"/>
    <property type="project" value="UniProtKB-KW"/>
</dbReference>
<dbReference type="GO" id="GO:0009881">
    <property type="term" value="F:photoreceptor activity"/>
    <property type="evidence" value="ECO:0007669"/>
    <property type="project" value="UniProtKB-KW"/>
</dbReference>
<dbReference type="GO" id="GO:0007602">
    <property type="term" value="P:phototransduction"/>
    <property type="evidence" value="ECO:0007669"/>
    <property type="project" value="UniProtKB-KW"/>
</dbReference>
<dbReference type="GO" id="GO:0007601">
    <property type="term" value="P:visual perception"/>
    <property type="evidence" value="ECO:0007669"/>
    <property type="project" value="UniProtKB-KW"/>
</dbReference>
<dbReference type="CDD" id="cd15079">
    <property type="entry name" value="7tmA_photoreceptors_insect"/>
    <property type="match status" value="1"/>
</dbReference>
<dbReference type="FunFam" id="1.20.1070.10:FF:000044">
    <property type="entry name" value="Opsin, ultraviolet-sensitive"/>
    <property type="match status" value="1"/>
</dbReference>
<dbReference type="Gene3D" id="1.20.1070.10">
    <property type="entry name" value="Rhodopsin 7-helix transmembrane proteins"/>
    <property type="match status" value="1"/>
</dbReference>
<dbReference type="InterPro" id="IPR050125">
    <property type="entry name" value="GPCR_opsins"/>
</dbReference>
<dbReference type="InterPro" id="IPR000276">
    <property type="entry name" value="GPCR_Rhodpsn"/>
</dbReference>
<dbReference type="InterPro" id="IPR017452">
    <property type="entry name" value="GPCR_Rhodpsn_7TM"/>
</dbReference>
<dbReference type="InterPro" id="IPR001760">
    <property type="entry name" value="Opsin"/>
</dbReference>
<dbReference type="InterPro" id="IPR001391">
    <property type="entry name" value="Opsin_lateye"/>
</dbReference>
<dbReference type="InterPro" id="IPR027430">
    <property type="entry name" value="Retinal_BS"/>
</dbReference>
<dbReference type="PANTHER" id="PTHR24240">
    <property type="entry name" value="OPSIN"/>
    <property type="match status" value="1"/>
</dbReference>
<dbReference type="Pfam" id="PF00001">
    <property type="entry name" value="7tm_1"/>
    <property type="match status" value="1"/>
</dbReference>
<dbReference type="PRINTS" id="PR00237">
    <property type="entry name" value="GPCRRHODOPSN"/>
</dbReference>
<dbReference type="PRINTS" id="PR00238">
    <property type="entry name" value="OPSIN"/>
</dbReference>
<dbReference type="PRINTS" id="PR00578">
    <property type="entry name" value="OPSINLTRLEYE"/>
</dbReference>
<dbReference type="SUPFAM" id="SSF81321">
    <property type="entry name" value="Family A G protein-coupled receptor-like"/>
    <property type="match status" value="1"/>
</dbReference>
<dbReference type="PROSITE" id="PS00237">
    <property type="entry name" value="G_PROTEIN_RECEP_F1_1"/>
    <property type="match status" value="1"/>
</dbReference>
<dbReference type="PROSITE" id="PS50262">
    <property type="entry name" value="G_PROTEIN_RECEP_F1_2"/>
    <property type="match status" value="1"/>
</dbReference>
<dbReference type="PROSITE" id="PS00238">
    <property type="entry name" value="OPSIN"/>
    <property type="match status" value="1"/>
</dbReference>
<keyword id="KW-0157">Chromophore</keyword>
<keyword id="KW-1015">Disulfide bond</keyword>
<keyword id="KW-0297">G-protein coupled receptor</keyword>
<keyword id="KW-0325">Glycoprotein</keyword>
<keyword id="KW-0472">Membrane</keyword>
<keyword id="KW-0597">Phosphoprotein</keyword>
<keyword id="KW-0600">Photoreceptor protein</keyword>
<keyword id="KW-0675">Receptor</keyword>
<keyword id="KW-0681">Retinal protein</keyword>
<keyword id="KW-0716">Sensory transduction</keyword>
<keyword id="KW-0807">Transducer</keyword>
<keyword id="KW-0812">Transmembrane</keyword>
<keyword id="KW-1133">Transmembrane helix</keyword>
<keyword id="KW-0844">Vision</keyword>
<reference key="1">
    <citation type="journal article" date="1996" name="Invertebr. Neurosci.">
        <title>Ant opsins: sequences from the Saharan silver ant and the carpenter ant.</title>
        <authorList>
            <person name="Popp M.P."/>
            <person name="Grisshammer R."/>
            <person name="Hargrave P.A."/>
            <person name="Smith W.C."/>
        </authorList>
    </citation>
    <scope>NUCLEOTIDE SEQUENCE [MRNA]</scope>
    <source>
        <tissue>Retina</tissue>
    </source>
</reference>
<protein>
    <recommendedName>
        <fullName>Rhodopsin</fullName>
    </recommendedName>
</protein>
<evidence type="ECO:0000250" key="1"/>
<evidence type="ECO:0000255" key="2"/>
<evidence type="ECO:0000255" key="3">
    <source>
        <dbReference type="PROSITE-ProRule" id="PRU00521"/>
    </source>
</evidence>
<evidence type="ECO:0000256" key="4">
    <source>
        <dbReference type="SAM" id="MobiDB-lite"/>
    </source>
</evidence>
<sequence length="378" mass="41905">MMSIASGPSHAAYTWTAQGGGFGNQTVVDKVPPEMLHLVDAHWYQFPPMNPLWHAILGFVIGILGMISVIGNGMVIYIFTTTKSLRTPSNLLVINLAISDFLMMLSMSPAMVINCYYETWVLGPLVCELYGLTGSLFGCGSIWTMTMIAFDRYNVIVKGLSAKPMTINGALLRILGIWFFSLGWTIAPMFGWNRYVPEGNMTACGTDYLTKDLLSRSYILVYSFFCYFLPLFLIIYSYFFIIQAVAAHEKNMREQAKKMNVASLRSAENQSTSAECKLAKVALMTISLWFMAWTPYLVINYAGIFETVKINPLFTIWGSLFAKANAVYNPIVYGISHPKYRAALFQRFPSLACSSGPAGADTLSTTTTVTEGTEKPAA</sequence>